<sequence length="375" mass="40695">MSLMVVSMACVGFFLLQGAWTHEGGQDKPLLSAWPSAVVPRGGHVTLLCRSRLGFTIFSLYKEDGVPVPELYNKIFWKSILMGPVTPAHAGTYRCRGSHPRSPIEWSAPSNPLVIVVTGLFGKPSLSAQPGPTVRTGENVTLSCSSRSSFDMYHLSREGRAHEPRLPAVPSVDGTFQADFPLGPATHGGTYTCFSSLHDSPYEWSDPSDPLLVSVTGNSSSSSSSPTEPSSKTGIRRHLHILIGTSVAIILFIILFFFLLHCCCSNKKNAAVMDQEPAGDRTVNREDSDDQDPQEVTYAQLDHCVFTQTKITSPSQRPKTPPTDTTMYMELPNAKPRSLSPAHKHHSQALRGSSRETTALSQNRVASSHVPAAGI</sequence>
<accession>Q8NHK3</accession>
<accession>B0L651</accession>
<accession>Q8NHK4</accession>
<organism>
    <name type="scientific">Homo sapiens</name>
    <name type="common">Human</name>
    <dbReference type="NCBI Taxonomy" id="9606"/>
    <lineage>
        <taxon>Eukaryota</taxon>
        <taxon>Metazoa</taxon>
        <taxon>Chordata</taxon>
        <taxon>Craniata</taxon>
        <taxon>Vertebrata</taxon>
        <taxon>Euteleostomi</taxon>
        <taxon>Mammalia</taxon>
        <taxon>Eutheria</taxon>
        <taxon>Euarchontoglires</taxon>
        <taxon>Primates</taxon>
        <taxon>Haplorrhini</taxon>
        <taxon>Catarrhini</taxon>
        <taxon>Hominidae</taxon>
        <taxon>Homo</taxon>
    </lineage>
</organism>
<dbReference type="EMBL" id="EF379093">
    <property type="protein sequence ID" value="ABM92652.1"/>
    <property type="molecule type" value="Genomic_DNA"/>
</dbReference>
<dbReference type="EMBL" id="GU182339">
    <property type="status" value="NOT_ANNOTATED_CDS"/>
    <property type="molecule type" value="Genomic_DNA"/>
</dbReference>
<dbReference type="EMBL" id="GU182347">
    <property type="status" value="NOT_ANNOTATED_CDS"/>
    <property type="molecule type" value="Genomic_DNA"/>
</dbReference>
<dbReference type="EMBL" id="GU182351">
    <property type="status" value="NOT_ANNOTATED_CDS"/>
    <property type="molecule type" value="Genomic_DNA"/>
</dbReference>
<dbReference type="EMBL" id="JX008030">
    <property type="protein sequence ID" value="AFV74764.1"/>
    <property type="molecule type" value="Genomic_DNA"/>
</dbReference>
<dbReference type="EMBL" id="AF272157">
    <property type="protein sequence ID" value="AAG44797.1"/>
    <property type="molecule type" value="Genomic_DNA"/>
</dbReference>
<dbReference type="EMBL" id="AF271608">
    <property type="protein sequence ID" value="AAG44778.1"/>
    <property type="molecule type" value="mRNA"/>
</dbReference>
<dbReference type="EMBL" id="LM656213">
    <property type="protein sequence ID" value="CDX48185.1"/>
    <property type="molecule type" value="Genomic_DNA"/>
</dbReference>
<dbReference type="EMBL" id="KP420440">
    <property type="protein sequence ID" value="AJI81002.1"/>
    <property type="molecule type" value="Genomic_DNA"/>
</dbReference>
<dbReference type="RefSeq" id="NP_001018091.1">
    <property type="nucleotide sequence ID" value="NM_001018081.1"/>
</dbReference>
<dbReference type="RefSeq" id="XP_016885731.1">
    <property type="nucleotide sequence ID" value="XM_017030242.1"/>
</dbReference>
<dbReference type="RefSeq" id="XP_016885761.1">
    <property type="nucleotide sequence ID" value="XM_017030272.1"/>
</dbReference>
<dbReference type="RefSeq" id="XP_054189404.1">
    <property type="nucleotide sequence ID" value="XM_054333429.1"/>
</dbReference>
<dbReference type="RefSeq" id="XP_054189409.1">
    <property type="nucleotide sequence ID" value="XM_054333434.1"/>
</dbReference>
<dbReference type="RefSeq" id="XP_054189452.1">
    <property type="nucleotide sequence ID" value="XM_054333477.1"/>
</dbReference>
<dbReference type="SMR" id="Q8NHK3"/>
<dbReference type="FunCoup" id="Q8NHK3">
    <property type="interactions" value="1"/>
</dbReference>
<dbReference type="GlyCosmos" id="Q8NHK3">
    <property type="glycosylation" value="1 site, No reported glycans"/>
</dbReference>
<dbReference type="GlyGen" id="Q8NHK3">
    <property type="glycosylation" value="3 sites"/>
</dbReference>
<dbReference type="iPTMnet" id="Q8NHK3"/>
<dbReference type="PhosphoSitePlus" id="Q8NHK3"/>
<dbReference type="BioMuta" id="KIR2DL5B"/>
<dbReference type="DMDM" id="74760352"/>
<dbReference type="jPOST" id="Q8NHK3"/>
<dbReference type="MassIVE" id="Q8NHK3"/>
<dbReference type="DNASU" id="553128"/>
<dbReference type="GeneID" id="553128"/>
<dbReference type="KEGG" id="hsa:553128"/>
<dbReference type="UCSC" id="uc032lsl.2">
    <property type="organism name" value="human"/>
</dbReference>
<dbReference type="AGR" id="HGNC:16346"/>
<dbReference type="CTD" id="553128"/>
<dbReference type="DisGeNET" id="553128"/>
<dbReference type="GeneCards" id="KIR2DL5B"/>
<dbReference type="HGNC" id="HGNC:16346">
    <property type="gene designation" value="KIR2DL5B"/>
</dbReference>
<dbReference type="MIM" id="615727">
    <property type="type" value="gene"/>
</dbReference>
<dbReference type="neXtProt" id="NX_Q8NHK3"/>
<dbReference type="PharmGKB" id="PA142671591"/>
<dbReference type="InParanoid" id="Q8NHK3"/>
<dbReference type="PAN-GO" id="Q8NHK3">
    <property type="GO annotations" value="1 GO annotation based on evolutionary models"/>
</dbReference>
<dbReference type="BioGRID-ORCS" id="553128">
    <property type="hits" value="1 hit in 32 CRISPR screens"/>
</dbReference>
<dbReference type="GenomeRNAi" id="553128"/>
<dbReference type="Pharos" id="Q8NHK3">
    <property type="development level" value="Tdark"/>
</dbReference>
<dbReference type="PRO" id="PR:Q8NHK3"/>
<dbReference type="Proteomes" id="UP000005640">
    <property type="component" value="Unplaced"/>
</dbReference>
<dbReference type="RNAct" id="Q8NHK3">
    <property type="molecule type" value="protein"/>
</dbReference>
<dbReference type="GO" id="GO:0005886">
    <property type="term" value="C:plasma membrane"/>
    <property type="evidence" value="ECO:0000318"/>
    <property type="project" value="GO_Central"/>
</dbReference>
<dbReference type="GO" id="GO:0002764">
    <property type="term" value="P:immune response-regulating signaling pathway"/>
    <property type="evidence" value="ECO:0000318"/>
    <property type="project" value="GO_Central"/>
</dbReference>
<dbReference type="FunFam" id="2.60.40.10:FF:000033">
    <property type="entry name" value="Killer cell immunoglobulin-like receptor"/>
    <property type="match status" value="1"/>
</dbReference>
<dbReference type="FunFam" id="2.60.40.10:FF:000049">
    <property type="entry name" value="Leukocyte immunoglobulin-like receptor subfamily B member 1"/>
    <property type="match status" value="1"/>
</dbReference>
<dbReference type="Gene3D" id="2.60.40.10">
    <property type="entry name" value="Immunoglobulins"/>
    <property type="match status" value="2"/>
</dbReference>
<dbReference type="InterPro" id="IPR036179">
    <property type="entry name" value="Ig-like_dom_sf"/>
</dbReference>
<dbReference type="InterPro" id="IPR013783">
    <property type="entry name" value="Ig-like_fold"/>
</dbReference>
<dbReference type="InterPro" id="IPR050412">
    <property type="entry name" value="Ig-like_Receptors_ImmuneReg"/>
</dbReference>
<dbReference type="InterPro" id="IPR003599">
    <property type="entry name" value="Ig_sub"/>
</dbReference>
<dbReference type="InterPro" id="IPR013151">
    <property type="entry name" value="Immunoglobulin_dom"/>
</dbReference>
<dbReference type="PANTHER" id="PTHR11738:SF169">
    <property type="entry name" value="KILLER CELL IMMUNOGLOBULIN-LIKE RECEPTOR 2DL5A-RELATED"/>
    <property type="match status" value="1"/>
</dbReference>
<dbReference type="PANTHER" id="PTHR11738">
    <property type="entry name" value="MHC CLASS I NK CELL RECEPTOR"/>
    <property type="match status" value="1"/>
</dbReference>
<dbReference type="Pfam" id="PF00047">
    <property type="entry name" value="ig"/>
    <property type="match status" value="2"/>
</dbReference>
<dbReference type="SMART" id="SM00409">
    <property type="entry name" value="IG"/>
    <property type="match status" value="2"/>
</dbReference>
<dbReference type="SUPFAM" id="SSF48726">
    <property type="entry name" value="Immunoglobulin"/>
    <property type="match status" value="2"/>
</dbReference>
<reference key="1">
    <citation type="journal article" date="2008" name="Immunogenetics">
        <title>Promoter variants of KIR2DL5 add to diversity and may impact gene expression.</title>
        <authorList>
            <person name="Mulrooney T.J."/>
            <person name="Hou L."/>
            <person name="Steiner N.K."/>
            <person name="Chen M."/>
            <person name="Belle I."/>
            <person name="Ng J."/>
            <person name="Hurley C.K."/>
        </authorList>
    </citation>
    <scope>NUCLEOTIDE SEQUENCE [GENOMIC DNA]</scope>
</reference>
<reference key="2">
    <citation type="journal article" date="2010" name="PLoS ONE">
        <title>Different patterns of evolution in the centromeric and telomeric regions of group A and B haplotypes of the human killer cell Ig-like receptor locus.</title>
        <authorList>
            <person name="Pyo C.W."/>
            <person name="Guethlein L.A."/>
            <person name="Vu Q."/>
            <person name="Wang R."/>
            <person name="Abi-Rached L."/>
            <person name="Norman P.J."/>
            <person name="Marsh S.G."/>
            <person name="Miller J.S."/>
            <person name="Parham P."/>
            <person name="Geraghty D.E."/>
        </authorList>
    </citation>
    <scope>NUCLEOTIDE SEQUENCE [GENOMIC DNA]</scope>
</reference>
<reference key="3">
    <citation type="journal article" date="2013" name="BMC Genomics">
        <title>Recombinant structures expand and contract inter and intragenic diversification at the KIR locus.</title>
        <authorList>
            <person name="Pyo C.W."/>
            <person name="Wang R."/>
            <person name="Vu Q."/>
            <person name="Cereb N."/>
            <person name="Yang S.Y."/>
            <person name="Duh F.M."/>
            <person name="Wolinsky S."/>
            <person name="Martin M.P."/>
            <person name="Carrington M."/>
            <person name="Geraghty D.E."/>
        </authorList>
    </citation>
    <scope>NUCLEOTIDE SEQUENCE [GENOMIC DNA]</scope>
</reference>
<reference key="4">
    <citation type="submission" date="2000-05" db="EMBL/GenBank/DDBJ databases">
        <title>KIR2DLX is a member of a KIR gene family encoding both activating and inhibiting receptor genes.</title>
        <authorList>
            <person name="Selvakumar A."/>
            <person name="Dupont B."/>
        </authorList>
    </citation>
    <scope>NUCLEOTIDE SEQUENCE [GENOMIC DNA / MRNA]</scope>
    <scope>VARIANTS ILE-6; ALA-141 AND GLY-276</scope>
</reference>
<reference key="5">
    <citation type="submission" date="2014-07" db="EMBL/GenBank/DDBJ databases">
        <title>KIR Diversity in Africans.</title>
        <authorList>
            <person name="Nemat-Gorgani N."/>
            <person name="Norman P.J."/>
            <person name="Parham P."/>
        </authorList>
    </citation>
    <scope>NUCLEOTIDE SEQUENCE [GENOMIC DNA]</scope>
</reference>
<reference key="6">
    <citation type="submission" date="2016-05" db="EMBL/GenBank/DDBJ databases">
        <title>Full haplotype sequences of the killer immunoglobulin-like receptor (kir) region in several diverse diploid individuals using single molecule, real-time sequencing.</title>
        <authorList>
            <person name="Roe D."/>
            <person name="Vierra-Green C."/>
            <person name="Pyo C.-W."/>
            <person name="Eng K."/>
            <person name="Hall R."/>
            <person name="Spellman S."/>
            <person name="Ranade S."/>
            <person name="Geraghty D.E."/>
            <person name="Maiers M."/>
        </authorList>
    </citation>
    <scope>NUCLEOTIDE SEQUENCE [GENOMIC DNA]</scope>
</reference>
<reference key="7">
    <citation type="journal article" date="2004" name="Nature">
        <title>The DNA sequence and biology of human chromosome 19.</title>
        <authorList>
            <person name="Grimwood J."/>
            <person name="Gordon L.A."/>
            <person name="Olsen A.S."/>
            <person name="Terry A."/>
            <person name="Schmutz J."/>
            <person name="Lamerdin J.E."/>
            <person name="Hellsten U."/>
            <person name="Goodstein D."/>
            <person name="Couronne O."/>
            <person name="Tran-Gyamfi M."/>
            <person name="Aerts A."/>
            <person name="Altherr M."/>
            <person name="Ashworth L."/>
            <person name="Bajorek E."/>
            <person name="Black S."/>
            <person name="Branscomb E."/>
            <person name="Caenepeel S."/>
            <person name="Carrano A.V."/>
            <person name="Caoile C."/>
            <person name="Chan Y.M."/>
            <person name="Christensen M."/>
            <person name="Cleland C.A."/>
            <person name="Copeland A."/>
            <person name="Dalin E."/>
            <person name="Dehal P."/>
            <person name="Denys M."/>
            <person name="Detter J.C."/>
            <person name="Escobar J."/>
            <person name="Flowers D."/>
            <person name="Fotopulos D."/>
            <person name="Garcia C."/>
            <person name="Georgescu A.M."/>
            <person name="Glavina T."/>
            <person name="Gomez M."/>
            <person name="Gonzales E."/>
            <person name="Groza M."/>
            <person name="Hammon N."/>
            <person name="Hawkins T."/>
            <person name="Haydu L."/>
            <person name="Ho I."/>
            <person name="Huang W."/>
            <person name="Israni S."/>
            <person name="Jett J."/>
            <person name="Kadner K."/>
            <person name="Kimball H."/>
            <person name="Kobayashi A."/>
            <person name="Larionov V."/>
            <person name="Leem S.-H."/>
            <person name="Lopez F."/>
            <person name="Lou Y."/>
            <person name="Lowry S."/>
            <person name="Malfatti S."/>
            <person name="Martinez D."/>
            <person name="McCready P.M."/>
            <person name="Medina C."/>
            <person name="Morgan J."/>
            <person name="Nelson K."/>
            <person name="Nolan M."/>
            <person name="Ovcharenko I."/>
            <person name="Pitluck S."/>
            <person name="Pollard M."/>
            <person name="Popkie A.P."/>
            <person name="Predki P."/>
            <person name="Quan G."/>
            <person name="Ramirez L."/>
            <person name="Rash S."/>
            <person name="Retterer J."/>
            <person name="Rodriguez A."/>
            <person name="Rogers S."/>
            <person name="Salamov A."/>
            <person name="Salazar A."/>
            <person name="She X."/>
            <person name="Smith D."/>
            <person name="Slezak T."/>
            <person name="Solovyev V."/>
            <person name="Thayer N."/>
            <person name="Tice H."/>
            <person name="Tsai M."/>
            <person name="Ustaszewska A."/>
            <person name="Vo N."/>
            <person name="Wagner M."/>
            <person name="Wheeler J."/>
            <person name="Wu K."/>
            <person name="Xie G."/>
            <person name="Yang J."/>
            <person name="Dubchak I."/>
            <person name="Furey T.S."/>
            <person name="DeJong P."/>
            <person name="Dickson M."/>
            <person name="Gordon D."/>
            <person name="Eichler E.E."/>
            <person name="Pennacchio L.A."/>
            <person name="Richardson P."/>
            <person name="Stubbs L."/>
            <person name="Rokhsar D.S."/>
            <person name="Myers R.M."/>
            <person name="Rubin E.M."/>
            <person name="Lucas S.M."/>
        </authorList>
    </citation>
    <scope>NUCLEOTIDE SEQUENCE [LARGE SCALE GENOMIC DNA]</scope>
</reference>
<reference key="8">
    <citation type="journal article" date="2002" name="Immunogenetics">
        <title>Some human KIR haplotypes contain two KIR2DL5 genes: KIR2DL5A and KIR2DL5B.</title>
        <authorList>
            <person name="Gomez-Lozano N."/>
            <person name="Gardiner C.M."/>
            <person name="Parham P."/>
            <person name="Vilches C."/>
        </authorList>
    </citation>
    <scope>GENE FAMILY</scope>
</reference>
<comment type="function">
    <text>Receptor on natural killer (NK) cells for HLA-C alleles. Inhibits the activity of NK cells thus preventing cell lysis.</text>
</comment>
<comment type="subcellular location">
    <subcellularLocation>
        <location>Cell membrane</location>
        <topology>Single-pass type I membrane protein</topology>
    </subcellularLocation>
</comment>
<comment type="similarity">
    <text evidence="5">Belongs to the immunoglobulin superfamily.</text>
</comment>
<comment type="caution">
    <text evidence="5">The KIR2DL5B gene is not directly represented on the GRCh38 primary reference genome assembly but on alternate loci of that assembly.</text>
</comment>
<protein>
    <recommendedName>
        <fullName>Killer cell immunoglobulin-like receptor 2DL5B</fullName>
    </recommendedName>
    <alternativeName>
        <fullName>CD158 antigen-like family member F2</fullName>
    </alternativeName>
    <alternativeName>
        <fullName>Killer cell immunoglobulin-like receptor 2DLX</fullName>
    </alternativeName>
    <cdAntigenName>CD158f2</cdAntigenName>
</protein>
<feature type="signal peptide" evidence="2">
    <location>
        <begin position="1"/>
        <end position="21"/>
    </location>
</feature>
<feature type="chain" id="PRO_5000058328" description="Killer cell immunoglobulin-like receptor 2DL5B">
    <location>
        <begin position="22"/>
        <end position="375"/>
    </location>
</feature>
<feature type="topological domain" description="Extracellular" evidence="2">
    <location>
        <begin position="22"/>
        <end position="238"/>
    </location>
</feature>
<feature type="transmembrane region" description="Helical" evidence="2">
    <location>
        <begin position="239"/>
        <end position="259"/>
    </location>
</feature>
<feature type="topological domain" description="Cytoplasmic" evidence="2">
    <location>
        <begin position="260"/>
        <end position="375"/>
    </location>
</feature>
<feature type="domain" description="Ig-like C2-type 1">
    <location>
        <begin position="42"/>
        <end position="102"/>
    </location>
</feature>
<feature type="domain" description="Ig-like C2-type 2">
    <location>
        <begin position="137"/>
        <end position="200"/>
    </location>
</feature>
<feature type="region of interest" description="Disordered" evidence="3">
    <location>
        <begin position="213"/>
        <end position="233"/>
    </location>
</feature>
<feature type="region of interest" description="Disordered" evidence="3">
    <location>
        <begin position="334"/>
        <end position="375"/>
    </location>
</feature>
<feature type="compositionally biased region" description="Low complexity" evidence="3">
    <location>
        <begin position="219"/>
        <end position="231"/>
    </location>
</feature>
<feature type="compositionally biased region" description="Polar residues" evidence="3">
    <location>
        <begin position="355"/>
        <end position="366"/>
    </location>
</feature>
<feature type="glycosylation site" description="N-linked (GlcNAc...) asparagine" evidence="2">
    <location>
        <position position="218"/>
    </location>
</feature>
<feature type="disulfide bond" evidence="1">
    <location>
        <begin position="49"/>
        <end position="95"/>
    </location>
</feature>
<feature type="disulfide bond" evidence="1">
    <location>
        <begin position="144"/>
        <end position="193"/>
    </location>
</feature>
<feature type="sequence variant" id="VAR_080174" evidence="4">
    <original>V</original>
    <variation>I</variation>
    <location>
        <position position="6"/>
    </location>
</feature>
<feature type="sequence variant" id="VAR_080175" evidence="4">
    <original>T</original>
    <variation>A</variation>
    <location>
        <position position="141"/>
    </location>
</feature>
<feature type="sequence variant" id="VAR_080176" evidence="4">
    <original>E</original>
    <variation>G</variation>
    <location>
        <position position="276"/>
    </location>
</feature>
<feature type="sequence conflict" description="In Ref. 4; AAG44778." evidence="5" ref="4">
    <original>T</original>
    <variation>A</variation>
    <location>
        <position position="320"/>
    </location>
</feature>
<evidence type="ECO:0000250" key="1"/>
<evidence type="ECO:0000255" key="2"/>
<evidence type="ECO:0000256" key="3">
    <source>
        <dbReference type="SAM" id="MobiDB-lite"/>
    </source>
</evidence>
<evidence type="ECO:0000269" key="4">
    <source ref="4"/>
</evidence>
<evidence type="ECO:0000305" key="5"/>
<keyword id="KW-1003">Cell membrane</keyword>
<keyword id="KW-1015">Disulfide bond</keyword>
<keyword id="KW-0325">Glycoprotein</keyword>
<keyword id="KW-0393">Immunoglobulin domain</keyword>
<keyword id="KW-0472">Membrane</keyword>
<keyword id="KW-0675">Receptor</keyword>
<keyword id="KW-1185">Reference proteome</keyword>
<keyword id="KW-0677">Repeat</keyword>
<keyword id="KW-0732">Signal</keyword>
<keyword id="KW-0812">Transmembrane</keyword>
<keyword id="KW-1133">Transmembrane helix</keyword>
<proteinExistence type="evidence at transcript level"/>
<name>KI2LB_HUMAN</name>
<gene>
    <name type="primary">KIR2DL5B</name>
    <name type="synonym">CD158F</name>
    <name type="synonym">CD158F2</name>
    <name type="synonym">KIR2DL5</name>
    <name type="synonym">KIR2DLX</name>
</gene>